<reference key="1">
    <citation type="journal article" date="2004" name="Science">
        <title>A predator unmasked: life cycle of Bdellovibrio bacteriovorus from a genomic perspective.</title>
        <authorList>
            <person name="Rendulic S."/>
            <person name="Jagtap P."/>
            <person name="Rosinus A."/>
            <person name="Eppinger M."/>
            <person name="Baar C."/>
            <person name="Lanz C."/>
            <person name="Keller H."/>
            <person name="Lambert C."/>
            <person name="Evans K.J."/>
            <person name="Goesmann A."/>
            <person name="Meyer F."/>
            <person name="Sockett R.E."/>
            <person name="Schuster S.C."/>
        </authorList>
    </citation>
    <scope>NUCLEOTIDE SEQUENCE [LARGE SCALE GENOMIC DNA]</scope>
    <source>
        <strain>ATCC 15356 / DSM 50701 / NCIMB 9529 / HD100</strain>
    </source>
</reference>
<dbReference type="EC" id="6.2.1.1" evidence="1"/>
<dbReference type="EMBL" id="BX842649">
    <property type="protein sequence ID" value="CAE79201.1"/>
    <property type="molecule type" value="Genomic_DNA"/>
</dbReference>
<dbReference type="RefSeq" id="WP_011163803.1">
    <property type="nucleotide sequence ID" value="NC_005363.1"/>
</dbReference>
<dbReference type="SMR" id="Q6MNF1"/>
<dbReference type="STRING" id="264462.Bd1306"/>
<dbReference type="GeneID" id="93012325"/>
<dbReference type="KEGG" id="bba:Bd1306"/>
<dbReference type="eggNOG" id="COG0365">
    <property type="taxonomic scope" value="Bacteria"/>
</dbReference>
<dbReference type="HOGENOM" id="CLU_000022_3_6_7"/>
<dbReference type="Proteomes" id="UP000008080">
    <property type="component" value="Chromosome"/>
</dbReference>
<dbReference type="GO" id="GO:0005829">
    <property type="term" value="C:cytosol"/>
    <property type="evidence" value="ECO:0007669"/>
    <property type="project" value="TreeGrafter"/>
</dbReference>
<dbReference type="GO" id="GO:0003987">
    <property type="term" value="F:acetate-CoA ligase activity"/>
    <property type="evidence" value="ECO:0007669"/>
    <property type="project" value="UniProtKB-UniRule"/>
</dbReference>
<dbReference type="GO" id="GO:0016208">
    <property type="term" value="F:AMP binding"/>
    <property type="evidence" value="ECO:0007669"/>
    <property type="project" value="InterPro"/>
</dbReference>
<dbReference type="GO" id="GO:0005524">
    <property type="term" value="F:ATP binding"/>
    <property type="evidence" value="ECO:0007669"/>
    <property type="project" value="UniProtKB-KW"/>
</dbReference>
<dbReference type="GO" id="GO:0046872">
    <property type="term" value="F:metal ion binding"/>
    <property type="evidence" value="ECO:0007669"/>
    <property type="project" value="UniProtKB-KW"/>
</dbReference>
<dbReference type="GO" id="GO:0019427">
    <property type="term" value="P:acetyl-CoA biosynthetic process from acetate"/>
    <property type="evidence" value="ECO:0007669"/>
    <property type="project" value="InterPro"/>
</dbReference>
<dbReference type="CDD" id="cd05966">
    <property type="entry name" value="ACS"/>
    <property type="match status" value="1"/>
</dbReference>
<dbReference type="FunFam" id="3.30.300.30:FF:000004">
    <property type="entry name" value="Acetyl-coenzyme A synthetase"/>
    <property type="match status" value="1"/>
</dbReference>
<dbReference type="FunFam" id="3.40.50.12780:FF:000001">
    <property type="entry name" value="Acetyl-coenzyme A synthetase"/>
    <property type="match status" value="1"/>
</dbReference>
<dbReference type="Gene3D" id="3.30.300.30">
    <property type="match status" value="1"/>
</dbReference>
<dbReference type="Gene3D" id="3.40.50.12780">
    <property type="entry name" value="N-terminal domain of ligase-like"/>
    <property type="match status" value="1"/>
</dbReference>
<dbReference type="HAMAP" id="MF_01123">
    <property type="entry name" value="Ac_CoA_synth"/>
    <property type="match status" value="1"/>
</dbReference>
<dbReference type="InterPro" id="IPR011904">
    <property type="entry name" value="Ac_CoA_lig"/>
</dbReference>
<dbReference type="InterPro" id="IPR032387">
    <property type="entry name" value="ACAS_N"/>
</dbReference>
<dbReference type="InterPro" id="IPR025110">
    <property type="entry name" value="AMP-bd_C"/>
</dbReference>
<dbReference type="InterPro" id="IPR045851">
    <property type="entry name" value="AMP-bd_C_sf"/>
</dbReference>
<dbReference type="InterPro" id="IPR020845">
    <property type="entry name" value="AMP-binding_CS"/>
</dbReference>
<dbReference type="InterPro" id="IPR000873">
    <property type="entry name" value="AMP-dep_synth/lig_dom"/>
</dbReference>
<dbReference type="InterPro" id="IPR042099">
    <property type="entry name" value="ANL_N_sf"/>
</dbReference>
<dbReference type="NCBIfam" id="TIGR02188">
    <property type="entry name" value="Ac_CoA_lig_AcsA"/>
    <property type="match status" value="1"/>
</dbReference>
<dbReference type="NCBIfam" id="NF001208">
    <property type="entry name" value="PRK00174.1"/>
    <property type="match status" value="1"/>
</dbReference>
<dbReference type="PANTHER" id="PTHR24095">
    <property type="entry name" value="ACETYL-COENZYME A SYNTHETASE"/>
    <property type="match status" value="1"/>
</dbReference>
<dbReference type="PANTHER" id="PTHR24095:SF14">
    <property type="entry name" value="ACETYL-COENZYME A SYNTHETASE 1"/>
    <property type="match status" value="1"/>
</dbReference>
<dbReference type="Pfam" id="PF16177">
    <property type="entry name" value="ACAS_N"/>
    <property type="match status" value="1"/>
</dbReference>
<dbReference type="Pfam" id="PF00501">
    <property type="entry name" value="AMP-binding"/>
    <property type="match status" value="1"/>
</dbReference>
<dbReference type="Pfam" id="PF13193">
    <property type="entry name" value="AMP-binding_C"/>
    <property type="match status" value="1"/>
</dbReference>
<dbReference type="SUPFAM" id="SSF56801">
    <property type="entry name" value="Acetyl-CoA synthetase-like"/>
    <property type="match status" value="1"/>
</dbReference>
<dbReference type="PROSITE" id="PS00455">
    <property type="entry name" value="AMP_BINDING"/>
    <property type="match status" value="1"/>
</dbReference>
<comment type="function">
    <text evidence="1">Catalyzes the conversion of acetate into acetyl-CoA (AcCoA), an essential intermediate at the junction of anabolic and catabolic pathways. AcsA undergoes a two-step reaction. In the first half reaction, AcsA combines acetate with ATP to form acetyl-adenylate (AcAMP) intermediate. In the second half reaction, it can then transfer the acetyl group from AcAMP to the sulfhydryl group of CoA, forming the product AcCoA.</text>
</comment>
<comment type="catalytic activity">
    <reaction evidence="1">
        <text>acetate + ATP + CoA = acetyl-CoA + AMP + diphosphate</text>
        <dbReference type="Rhea" id="RHEA:23176"/>
        <dbReference type="ChEBI" id="CHEBI:30089"/>
        <dbReference type="ChEBI" id="CHEBI:30616"/>
        <dbReference type="ChEBI" id="CHEBI:33019"/>
        <dbReference type="ChEBI" id="CHEBI:57287"/>
        <dbReference type="ChEBI" id="CHEBI:57288"/>
        <dbReference type="ChEBI" id="CHEBI:456215"/>
        <dbReference type="EC" id="6.2.1.1"/>
    </reaction>
</comment>
<comment type="cofactor">
    <cofactor evidence="1">
        <name>Mg(2+)</name>
        <dbReference type="ChEBI" id="CHEBI:18420"/>
    </cofactor>
</comment>
<comment type="PTM">
    <text evidence="1">Acetylated. Deacetylation by the SIR2-homolog deacetylase activates the enzyme.</text>
</comment>
<comment type="similarity">
    <text evidence="1">Belongs to the ATP-dependent AMP-binding enzyme family.</text>
</comment>
<organism>
    <name type="scientific">Bdellovibrio bacteriovorus (strain ATCC 15356 / DSM 50701 / NCIMB 9529 / HD100)</name>
    <dbReference type="NCBI Taxonomy" id="264462"/>
    <lineage>
        <taxon>Bacteria</taxon>
        <taxon>Pseudomonadati</taxon>
        <taxon>Bdellovibrionota</taxon>
        <taxon>Bdellovibrionia</taxon>
        <taxon>Bdellovibrionales</taxon>
        <taxon>Pseudobdellovibrionaceae</taxon>
        <taxon>Bdellovibrio</taxon>
    </lineage>
</organism>
<proteinExistence type="inferred from homology"/>
<keyword id="KW-0007">Acetylation</keyword>
<keyword id="KW-0067">ATP-binding</keyword>
<keyword id="KW-0436">Ligase</keyword>
<keyword id="KW-0460">Magnesium</keyword>
<keyword id="KW-0479">Metal-binding</keyword>
<keyword id="KW-0547">Nucleotide-binding</keyword>
<keyword id="KW-1185">Reference proteome</keyword>
<sequence length="645" mass="72415">MHKELYPVNSEVAKKAWIDEAKYKAMYERSIQDNEAFWAEQAERLDWIKKWDKVKEVSFKKPVSIKWYLGGKMNVSYNCVDRHLKTRGDKTALLWEADNPSTPSRKITYKELHLEVCRFANVLKKMGVKKGDVVTIYMPMIPDTAVAMLACARIGAVHSVVFAGFSPDSISDRILDGQCRFVITGDAGFRGSKVVALKENIDKALVKTPDVQKVLVVKYAGTTVDMKPGRDLWYHEEVKTVSDQCEPEPMDAEDPLFILYTSGSTGKPKGVMHTTGGYLVYASMTHQYVFDYHEDDIYWCSADVGWVTGHSYIVYGPLANGATSLFFEGVPNYPTPSRFWEVVDKHKVTIFYTSPTAIRSLMREGDAAVKTTSRKTLRLLGSVGEPINPEAWAWYHDVVGEGRCPVVDTWWQTETGGILITPLPGAIAQKPGSATLPFFGVQPKLLTNEGQEIHGPGEGVLVIADSWPGQMRTVYRNHERFEDTYFSNYPGYYFTGDGCRRDQDGYYWITGRVDDVINVSGHRLGTAEIESALVAHHKVAEAAVVGYPHDIKGQGIYAFVTLKSGETASEELRKELIQTVRKEIGPIATPDLIQWAPRLPKTRSGKIMRRILRKIAENHPDQLGDTTTLSEPAVVQELVDNRMNR</sequence>
<evidence type="ECO:0000255" key="1">
    <source>
        <dbReference type="HAMAP-Rule" id="MF_01123"/>
    </source>
</evidence>
<gene>
    <name evidence="1" type="primary">acsA</name>
    <name type="ordered locus">Bd1306</name>
</gene>
<protein>
    <recommendedName>
        <fullName evidence="1">Acetyl-coenzyme A synthetase</fullName>
        <shortName evidence="1">AcCoA synthetase</shortName>
        <shortName evidence="1">Acs</shortName>
        <ecNumber evidence="1">6.2.1.1</ecNumber>
    </recommendedName>
    <alternativeName>
        <fullName evidence="1">Acetate--CoA ligase</fullName>
    </alternativeName>
    <alternativeName>
        <fullName evidence="1">Acyl-activating enzyme</fullName>
    </alternativeName>
</protein>
<name>ACSA_BDEBA</name>
<feature type="chain" id="PRO_1000065272" description="Acetyl-coenzyme A synthetase">
    <location>
        <begin position="1"/>
        <end position="645"/>
    </location>
</feature>
<feature type="binding site" evidence="1">
    <location>
        <begin position="190"/>
        <end position="193"/>
    </location>
    <ligand>
        <name>CoA</name>
        <dbReference type="ChEBI" id="CHEBI:57287"/>
    </ligand>
</feature>
<feature type="binding site" evidence="1">
    <location>
        <position position="308"/>
    </location>
    <ligand>
        <name>CoA</name>
        <dbReference type="ChEBI" id="CHEBI:57287"/>
    </ligand>
</feature>
<feature type="binding site" evidence="1">
    <location>
        <position position="332"/>
    </location>
    <ligand>
        <name>CoA</name>
        <dbReference type="ChEBI" id="CHEBI:57287"/>
    </ligand>
</feature>
<feature type="binding site" evidence="1">
    <location>
        <begin position="384"/>
        <end position="386"/>
    </location>
    <ligand>
        <name>ATP</name>
        <dbReference type="ChEBI" id="CHEBI:30616"/>
    </ligand>
</feature>
<feature type="binding site" evidence="1">
    <location>
        <begin position="408"/>
        <end position="413"/>
    </location>
    <ligand>
        <name>ATP</name>
        <dbReference type="ChEBI" id="CHEBI:30616"/>
    </ligand>
</feature>
<feature type="binding site" evidence="1">
    <location>
        <position position="497"/>
    </location>
    <ligand>
        <name>ATP</name>
        <dbReference type="ChEBI" id="CHEBI:30616"/>
    </ligand>
</feature>
<feature type="binding site" evidence="1">
    <location>
        <position position="512"/>
    </location>
    <ligand>
        <name>ATP</name>
        <dbReference type="ChEBI" id="CHEBI:30616"/>
    </ligand>
</feature>
<feature type="binding site" evidence="1">
    <location>
        <position position="520"/>
    </location>
    <ligand>
        <name>CoA</name>
        <dbReference type="ChEBI" id="CHEBI:57287"/>
    </ligand>
</feature>
<feature type="binding site" evidence="1">
    <location>
        <position position="523"/>
    </location>
    <ligand>
        <name>ATP</name>
        <dbReference type="ChEBI" id="CHEBI:30616"/>
    </ligand>
</feature>
<feature type="binding site" evidence="1">
    <location>
        <position position="534"/>
    </location>
    <ligand>
        <name>Mg(2+)</name>
        <dbReference type="ChEBI" id="CHEBI:18420"/>
    </ligand>
</feature>
<feature type="binding site" evidence="1">
    <location>
        <position position="536"/>
    </location>
    <ligand>
        <name>Mg(2+)</name>
        <dbReference type="ChEBI" id="CHEBI:18420"/>
    </ligand>
</feature>
<feature type="binding site" evidence="1">
    <location>
        <position position="539"/>
    </location>
    <ligand>
        <name>Mg(2+)</name>
        <dbReference type="ChEBI" id="CHEBI:18420"/>
    </ligand>
</feature>
<feature type="binding site">
    <location>
        <position position="581"/>
    </location>
    <ligand>
        <name>CoA</name>
        <dbReference type="ChEBI" id="CHEBI:57287"/>
    </ligand>
</feature>
<feature type="modified residue" description="N6-acetyllysine" evidence="1">
    <location>
        <position position="606"/>
    </location>
</feature>
<accession>Q6MNF1</accession>